<feature type="chain" id="PRO_0000218730" description="Villin-1">
    <location>
        <begin position="1"/>
        <end position="826"/>
    </location>
</feature>
<feature type="repeat" description="Gelsolin-like 1">
    <location>
        <begin position="27"/>
        <end position="76"/>
    </location>
</feature>
<feature type="repeat" description="Gelsolin-like 2">
    <location>
        <begin position="148"/>
        <end position="188"/>
    </location>
</feature>
<feature type="repeat" description="Gelsolin-like 3">
    <location>
        <begin position="265"/>
        <end position="309"/>
    </location>
</feature>
<feature type="repeat" description="Gelsolin-like 4">
    <location>
        <begin position="408"/>
        <end position="457"/>
    </location>
</feature>
<feature type="repeat" description="Gelsolin-like 5">
    <location>
        <begin position="528"/>
        <end position="568"/>
    </location>
</feature>
<feature type="repeat" description="Gelsolin-like 6">
    <location>
        <begin position="631"/>
        <end position="672"/>
    </location>
</feature>
<feature type="domain" description="HP" evidence="2">
    <location>
        <begin position="760"/>
        <end position="826"/>
    </location>
</feature>
<feature type="region of interest" description="Core">
    <location>
        <begin position="1"/>
        <end position="734"/>
    </location>
</feature>
<feature type="region of interest" description="Crucial for binding an actin filament">
    <location>
        <begin position="129"/>
        <end position="137"/>
    </location>
</feature>
<feature type="region of interest" description="Headpiece">
    <location>
        <begin position="735"/>
        <end position="826"/>
    </location>
</feature>
<feature type="region of interest" description="Absolutely required for activity">
    <location>
        <begin position="820"/>
        <end position="823"/>
    </location>
</feature>
<feature type="binding site" evidence="1">
    <location>
        <begin position="112"/>
        <end position="119"/>
    </location>
    <ligand>
        <name>a 1,2-diacyl-sn-glycero-3-phospho-(1D-myo-inositol-4,5-bisphosphate)</name>
        <dbReference type="ChEBI" id="CHEBI:58456"/>
    </ligand>
</feature>
<feature type="binding site" evidence="1">
    <location>
        <begin position="138"/>
        <end position="146"/>
    </location>
    <ligand>
        <name>a 1,2-diacyl-sn-glycero-3-phospho-(1D-myo-inositol-4,5-bisphosphate)</name>
        <dbReference type="ChEBI" id="CHEBI:58456"/>
    </ligand>
</feature>
<feature type="mutagenesis site" description="Reduces the actin-severing activity. Does not affect actin-capping activity." evidence="4">
    <original>R</original>
    <variation>A</variation>
    <location>
        <position position="138"/>
    </location>
</feature>
<feature type="mutagenesis site" description="Does not reduce the actin-severing activity. Does not affect actin-capping activity." evidence="4">
    <original>H</original>
    <variation>A</variation>
    <location>
        <position position="141"/>
    </location>
</feature>
<feature type="mutagenesis site" description="Reduces the actin-severing activity. Does not affect actin-capping activity." evidence="4">
    <original>G</original>
    <variation>A</variation>
    <location>
        <position position="144"/>
    </location>
</feature>
<feature type="mutagenesis site" description="Reduces the actin-severing activity. Does not affect actin-capping activity." evidence="4">
    <original>K</original>
    <variation>A</variation>
    <location>
        <position position="145"/>
    </location>
</feature>
<feature type="mutagenesis site" description="Reduces the actin-severing activity. Does not affect actin-capping activity." evidence="4">
    <original>K</original>
    <variation>A</variation>
    <location>
        <position position="146"/>
    </location>
</feature>
<feature type="mutagenesis site" description="Reduces affinity for F-actin." evidence="3">
    <original>R</original>
    <variation>A</variation>
    <location>
        <position position="787"/>
    </location>
</feature>
<feature type="mutagenesis site" description="Loss of F-actin binding." evidence="3">
    <original>W</original>
    <variation>A</variation>
    <location>
        <position position="814"/>
    </location>
</feature>
<feature type="strand" evidence="11">
    <location>
        <begin position="5"/>
        <end position="8"/>
    </location>
</feature>
<feature type="helix" evidence="12">
    <location>
        <begin position="9"/>
        <end position="11"/>
    </location>
</feature>
<feature type="strand" evidence="11">
    <location>
        <begin position="18"/>
        <end position="23"/>
    </location>
</feature>
<feature type="helix" evidence="11">
    <location>
        <begin position="25"/>
        <end position="27"/>
    </location>
</feature>
<feature type="turn" evidence="11">
    <location>
        <begin position="34"/>
        <end position="38"/>
    </location>
</feature>
<feature type="strand" evidence="11">
    <location>
        <begin position="42"/>
        <end position="44"/>
    </location>
</feature>
<feature type="strand" evidence="11">
    <location>
        <begin position="46"/>
        <end position="53"/>
    </location>
</feature>
<feature type="strand" evidence="11">
    <location>
        <begin position="55"/>
        <end position="66"/>
    </location>
</feature>
<feature type="helix" evidence="11">
    <location>
        <begin position="72"/>
        <end position="88"/>
    </location>
</feature>
<feature type="strand" evidence="11">
    <location>
        <begin position="95"/>
        <end position="99"/>
    </location>
</feature>
<feature type="turn" evidence="11">
    <location>
        <begin position="100"/>
        <end position="102"/>
    </location>
</feature>
<feature type="helix" evidence="11">
    <location>
        <begin position="104"/>
        <end position="110"/>
    </location>
</feature>
<feature type="strand" evidence="10">
    <location>
        <begin position="621"/>
        <end position="636"/>
    </location>
</feature>
<feature type="strand" evidence="10">
    <location>
        <begin position="649"/>
        <end position="653"/>
    </location>
</feature>
<feature type="strand" evidence="10">
    <location>
        <begin position="658"/>
        <end position="662"/>
    </location>
</feature>
<feature type="strand" evidence="10">
    <location>
        <begin position="664"/>
        <end position="666"/>
    </location>
</feature>
<feature type="helix" evidence="10">
    <location>
        <begin position="668"/>
        <end position="682"/>
    </location>
</feature>
<feature type="helix" evidence="10">
    <location>
        <begin position="690"/>
        <end position="692"/>
    </location>
</feature>
<feature type="strand" evidence="10">
    <location>
        <begin position="696"/>
        <end position="698"/>
    </location>
</feature>
<feature type="helix" evidence="10">
    <location>
        <begin position="705"/>
        <end position="708"/>
    </location>
</feature>
<feature type="strand" evidence="10">
    <location>
        <begin position="711"/>
        <end position="713"/>
    </location>
</feature>
<feature type="helix" evidence="10">
    <location>
        <begin position="716"/>
        <end position="720"/>
    </location>
</feature>
<feature type="turn" evidence="10">
    <location>
        <begin position="721"/>
        <end position="723"/>
    </location>
</feature>
<feature type="helix" evidence="9">
    <location>
        <begin position="768"/>
        <end position="772"/>
    </location>
</feature>
<feature type="helix" evidence="9">
    <location>
        <begin position="776"/>
        <end position="778"/>
    </location>
</feature>
<feature type="strand" evidence="7">
    <location>
        <begin position="785"/>
        <end position="787"/>
    </location>
</feature>
<feature type="helix" evidence="9">
    <location>
        <begin position="788"/>
        <end position="791"/>
    </location>
</feature>
<feature type="helix" evidence="8">
    <location>
        <begin position="794"/>
        <end position="801"/>
    </location>
</feature>
<feature type="helix" evidence="8">
    <location>
        <begin position="805"/>
        <end position="810"/>
    </location>
</feature>
<feature type="helix" evidence="8">
    <location>
        <begin position="813"/>
        <end position="823"/>
    </location>
</feature>
<proteinExistence type="evidence at protein level"/>
<protein>
    <recommendedName>
        <fullName>Villin-1</fullName>
    </recommendedName>
</protein>
<dbReference type="EMBL" id="J03781">
    <property type="protein sequence ID" value="AAA49133.1"/>
    <property type="molecule type" value="mRNA"/>
</dbReference>
<dbReference type="PIR" id="A31822">
    <property type="entry name" value="A31822"/>
</dbReference>
<dbReference type="RefSeq" id="NP_990773.1">
    <property type="nucleotide sequence ID" value="NM_205442.1"/>
</dbReference>
<dbReference type="PDB" id="1QQV">
    <property type="method" value="NMR"/>
    <property type="chains" value="A=760-826"/>
</dbReference>
<dbReference type="PDB" id="1VII">
    <property type="method" value="NMR"/>
    <property type="chains" value="A=792-826"/>
</dbReference>
<dbReference type="PDB" id="1WY3">
    <property type="method" value="X-ray"/>
    <property type="resolution" value="0.95 A"/>
    <property type="chains" value="A=792-826"/>
</dbReference>
<dbReference type="PDB" id="1WY4">
    <property type="method" value="X-ray"/>
    <property type="resolution" value="1.55 A"/>
    <property type="chains" value="A=792-826"/>
</dbReference>
<dbReference type="PDB" id="1YRF">
    <property type="method" value="X-ray"/>
    <property type="resolution" value="1.07 A"/>
    <property type="chains" value="A=792-826"/>
</dbReference>
<dbReference type="PDB" id="1YRI">
    <property type="method" value="X-ray"/>
    <property type="resolution" value="1.00 A"/>
    <property type="chains" value="A=792-826"/>
</dbReference>
<dbReference type="PDB" id="1YU5">
    <property type="method" value="X-ray"/>
    <property type="resolution" value="1.40 A"/>
    <property type="chains" value="X=760-826"/>
</dbReference>
<dbReference type="PDB" id="1YU7">
    <property type="method" value="X-ray"/>
    <property type="resolution" value="1.50 A"/>
    <property type="chains" value="X=760-826"/>
</dbReference>
<dbReference type="PDB" id="1YU8">
    <property type="method" value="X-ray"/>
    <property type="resolution" value="1.45 A"/>
    <property type="chains" value="X=760-826"/>
</dbReference>
<dbReference type="PDB" id="2F4K">
    <property type="method" value="X-ray"/>
    <property type="resolution" value="1.05 A"/>
    <property type="chains" value="A=792-826"/>
</dbReference>
<dbReference type="PDB" id="2JM0">
    <property type="method" value="NMR"/>
    <property type="chains" value="A=792-826"/>
</dbReference>
<dbReference type="PDB" id="2LLF">
    <property type="method" value="NMR"/>
    <property type="chains" value="A=619-725"/>
</dbReference>
<dbReference type="PDB" id="2PPZ">
    <property type="method" value="NMR"/>
    <property type="chains" value="A=792-826"/>
</dbReference>
<dbReference type="PDB" id="2RJV">
    <property type="method" value="X-ray"/>
    <property type="resolution" value="1.45 A"/>
    <property type="chains" value="A=760-826"/>
</dbReference>
<dbReference type="PDB" id="2RJW">
    <property type="method" value="X-ray"/>
    <property type="resolution" value="1.55 A"/>
    <property type="chains" value="A/B=760-826"/>
</dbReference>
<dbReference type="PDB" id="2RJX">
    <property type="method" value="X-ray"/>
    <property type="resolution" value="1.70 A"/>
    <property type="chains" value="A/B=760-826"/>
</dbReference>
<dbReference type="PDB" id="2RJY">
    <property type="method" value="X-ray"/>
    <property type="resolution" value="1.40 A"/>
    <property type="chains" value="A=760-826"/>
</dbReference>
<dbReference type="PDB" id="2VIK">
    <property type="method" value="NMR"/>
    <property type="chains" value="A=2-127"/>
</dbReference>
<dbReference type="PDB" id="2VIL">
    <property type="method" value="NMR"/>
    <property type="chains" value="A=2-127"/>
</dbReference>
<dbReference type="PDB" id="3MYA">
    <property type="method" value="X-ray"/>
    <property type="resolution" value="2.50 A"/>
    <property type="chains" value="A/B=760-826"/>
</dbReference>
<dbReference type="PDB" id="3MYC">
    <property type="method" value="X-ray"/>
    <property type="resolution" value="1.70 A"/>
    <property type="chains" value="A=760-826"/>
</dbReference>
<dbReference type="PDB" id="3MYE">
    <property type="method" value="X-ray"/>
    <property type="resolution" value="1.80 A"/>
    <property type="chains" value="X=760-826"/>
</dbReference>
<dbReference type="PDB" id="3NKJ">
    <property type="method" value="X-ray"/>
    <property type="resolution" value="1.60 A"/>
    <property type="chains" value="A=760-826"/>
</dbReference>
<dbReference type="PDB" id="3TJW">
    <property type="method" value="X-ray"/>
    <property type="resolution" value="1.46 A"/>
    <property type="chains" value="A/B=792-825"/>
</dbReference>
<dbReference type="PDB" id="3TRV">
    <property type="method" value="X-ray"/>
    <property type="resolution" value="1.00 A"/>
    <property type="chains" value="A/B=792-826"/>
</dbReference>
<dbReference type="PDB" id="3TRW">
    <property type="method" value="X-ray"/>
    <property type="resolution" value="2.10 A"/>
    <property type="chains" value="A/D=792-826"/>
</dbReference>
<dbReference type="PDB" id="3TRY">
    <property type="method" value="X-ray"/>
    <property type="resolution" value="2.30 A"/>
    <property type="chains" value="A=792-826"/>
</dbReference>
<dbReference type="PDB" id="4CZ3">
    <property type="method" value="NMR"/>
    <property type="chains" value="A=803-826"/>
</dbReference>
<dbReference type="PDB" id="4CZ4">
    <property type="method" value="NMR"/>
    <property type="chains" value="A=803-826"/>
</dbReference>
<dbReference type="PDB" id="5I1N">
    <property type="method" value="X-ray"/>
    <property type="resolution" value="1.30 A"/>
    <property type="chains" value="A/B/C/D=792-826"/>
</dbReference>
<dbReference type="PDB" id="5I1O">
    <property type="method" value="X-ray"/>
    <property type="resolution" value="1.35 A"/>
    <property type="chains" value="A/B/C/D=792-826"/>
</dbReference>
<dbReference type="PDB" id="5I1P">
    <property type="method" value="X-ray"/>
    <property type="resolution" value="1.40 A"/>
    <property type="chains" value="A/B/C/D=792-826"/>
</dbReference>
<dbReference type="PDB" id="5I1S">
    <property type="method" value="X-ray"/>
    <property type="resolution" value="1.12 A"/>
    <property type="chains" value="A/B=792-826"/>
</dbReference>
<dbReference type="PDB" id="9MF7">
    <property type="method" value="NMR"/>
    <property type="chains" value="A=792-826"/>
</dbReference>
<dbReference type="PDB" id="9MF8">
    <property type="method" value="NMR"/>
    <property type="chains" value="A=792-826"/>
</dbReference>
<dbReference type="PDB" id="9MF9">
    <property type="method" value="NMR"/>
    <property type="chains" value="A=792-826"/>
</dbReference>
<dbReference type="PDB" id="9MFA">
    <property type="method" value="NMR"/>
    <property type="chains" value="A=792-826"/>
</dbReference>
<dbReference type="PDB" id="9MFB">
    <property type="method" value="NMR"/>
    <property type="chains" value="A=792-826"/>
</dbReference>
<dbReference type="PDBsum" id="1QQV"/>
<dbReference type="PDBsum" id="1VII"/>
<dbReference type="PDBsum" id="1WY3"/>
<dbReference type="PDBsum" id="1WY4"/>
<dbReference type="PDBsum" id="1YRF"/>
<dbReference type="PDBsum" id="1YRI"/>
<dbReference type="PDBsum" id="1YU5"/>
<dbReference type="PDBsum" id="1YU7"/>
<dbReference type="PDBsum" id="1YU8"/>
<dbReference type="PDBsum" id="2F4K"/>
<dbReference type="PDBsum" id="2JM0"/>
<dbReference type="PDBsum" id="2LLF"/>
<dbReference type="PDBsum" id="2PPZ"/>
<dbReference type="PDBsum" id="2RJV"/>
<dbReference type="PDBsum" id="2RJW"/>
<dbReference type="PDBsum" id="2RJX"/>
<dbReference type="PDBsum" id="2RJY"/>
<dbReference type="PDBsum" id="2VIK"/>
<dbReference type="PDBsum" id="2VIL"/>
<dbReference type="PDBsum" id="3MYA"/>
<dbReference type="PDBsum" id="3MYC"/>
<dbReference type="PDBsum" id="3MYE"/>
<dbReference type="PDBsum" id="3NKJ"/>
<dbReference type="PDBsum" id="3TJW"/>
<dbReference type="PDBsum" id="3TRV"/>
<dbReference type="PDBsum" id="3TRW"/>
<dbReference type="PDBsum" id="3TRY"/>
<dbReference type="PDBsum" id="4CZ3"/>
<dbReference type="PDBsum" id="4CZ4"/>
<dbReference type="PDBsum" id="5I1N"/>
<dbReference type="PDBsum" id="5I1O"/>
<dbReference type="PDBsum" id="5I1P"/>
<dbReference type="PDBsum" id="5I1S"/>
<dbReference type="PDBsum" id="9MF7"/>
<dbReference type="PDBsum" id="9MF8"/>
<dbReference type="PDBsum" id="9MF9"/>
<dbReference type="PDBsum" id="9MFA"/>
<dbReference type="PDBsum" id="9MFB"/>
<dbReference type="BMRB" id="P02640"/>
<dbReference type="SMR" id="P02640"/>
<dbReference type="DIP" id="DIP-48339N"/>
<dbReference type="FunCoup" id="P02640">
    <property type="interactions" value="689"/>
</dbReference>
<dbReference type="IntAct" id="P02640">
    <property type="interactions" value="1"/>
</dbReference>
<dbReference type="STRING" id="9031.ENSGALP00000058215"/>
<dbReference type="PaxDb" id="9031-ENSGALP00000037398"/>
<dbReference type="GeneID" id="396423"/>
<dbReference type="KEGG" id="gga:396423"/>
<dbReference type="CTD" id="7429"/>
<dbReference type="VEuPathDB" id="HostDB:geneid_396423"/>
<dbReference type="eggNOG" id="KOG0443">
    <property type="taxonomic scope" value="Eukaryota"/>
</dbReference>
<dbReference type="InParanoid" id="P02640"/>
<dbReference type="OrthoDB" id="6375767at2759"/>
<dbReference type="PhylomeDB" id="P02640"/>
<dbReference type="EvolutionaryTrace" id="P02640"/>
<dbReference type="PRO" id="PR:P02640"/>
<dbReference type="Proteomes" id="UP000000539">
    <property type="component" value="Unassembled WGS sequence"/>
</dbReference>
<dbReference type="GO" id="GO:0015629">
    <property type="term" value="C:actin cytoskeleton"/>
    <property type="evidence" value="ECO:0000318"/>
    <property type="project" value="GO_Central"/>
</dbReference>
<dbReference type="GO" id="GO:0032432">
    <property type="term" value="C:actin filament bundle"/>
    <property type="evidence" value="ECO:0000250"/>
    <property type="project" value="UniProtKB"/>
</dbReference>
<dbReference type="GO" id="GO:0005737">
    <property type="term" value="C:cytoplasm"/>
    <property type="evidence" value="ECO:0000318"/>
    <property type="project" value="GO_Central"/>
</dbReference>
<dbReference type="GO" id="GO:0030175">
    <property type="term" value="C:filopodium"/>
    <property type="evidence" value="ECO:0000250"/>
    <property type="project" value="UniProtKB"/>
</dbReference>
<dbReference type="GO" id="GO:0032433">
    <property type="term" value="C:filopodium tip"/>
    <property type="evidence" value="ECO:0000250"/>
    <property type="project" value="UniProtKB"/>
</dbReference>
<dbReference type="GO" id="GO:0030027">
    <property type="term" value="C:lamellipodium"/>
    <property type="evidence" value="ECO:0000250"/>
    <property type="project" value="UniProtKB"/>
</dbReference>
<dbReference type="GO" id="GO:0005902">
    <property type="term" value="C:microvillus"/>
    <property type="evidence" value="ECO:0000250"/>
    <property type="project" value="UniProtKB"/>
</dbReference>
<dbReference type="GO" id="GO:0001726">
    <property type="term" value="C:ruffle"/>
    <property type="evidence" value="ECO:0000250"/>
    <property type="project" value="UniProtKB"/>
</dbReference>
<dbReference type="GO" id="GO:0051015">
    <property type="term" value="F:actin filament binding"/>
    <property type="evidence" value="ECO:0000250"/>
    <property type="project" value="UniProtKB"/>
</dbReference>
<dbReference type="GO" id="GO:0005509">
    <property type="term" value="F:calcium ion binding"/>
    <property type="evidence" value="ECO:0000250"/>
    <property type="project" value="UniProtKB"/>
</dbReference>
<dbReference type="GO" id="GO:0043027">
    <property type="term" value="F:cysteine-type endopeptidase inhibitor activity involved in apoptotic process"/>
    <property type="evidence" value="ECO:0000250"/>
    <property type="project" value="UniProtKB"/>
</dbReference>
<dbReference type="GO" id="GO:0035727">
    <property type="term" value="F:lysophosphatidic acid binding"/>
    <property type="evidence" value="ECO:0000250"/>
    <property type="project" value="UniProtKB"/>
</dbReference>
<dbReference type="GO" id="GO:0005546">
    <property type="term" value="F:phosphatidylinositol-4,5-bisphosphate binding"/>
    <property type="evidence" value="ECO:0000250"/>
    <property type="project" value="UniProtKB"/>
</dbReference>
<dbReference type="GO" id="GO:0042803">
    <property type="term" value="F:protein homodimerization activity"/>
    <property type="evidence" value="ECO:0000250"/>
    <property type="project" value="UniProtKB"/>
</dbReference>
<dbReference type="GO" id="GO:0051693">
    <property type="term" value="P:actin filament capping"/>
    <property type="evidence" value="ECO:0000250"/>
    <property type="project" value="UniProtKB"/>
</dbReference>
<dbReference type="GO" id="GO:0030042">
    <property type="term" value="P:actin filament depolymerization"/>
    <property type="evidence" value="ECO:0000250"/>
    <property type="project" value="UniProtKB"/>
</dbReference>
<dbReference type="GO" id="GO:0030041">
    <property type="term" value="P:actin filament polymerization"/>
    <property type="evidence" value="ECO:0000250"/>
    <property type="project" value="UniProtKB"/>
</dbReference>
<dbReference type="GO" id="GO:0051014">
    <property type="term" value="P:actin filament severing"/>
    <property type="evidence" value="ECO:0000250"/>
    <property type="project" value="UniProtKB"/>
</dbReference>
<dbReference type="GO" id="GO:0008154">
    <property type="term" value="P:actin polymerization or depolymerization"/>
    <property type="evidence" value="ECO:0000318"/>
    <property type="project" value="GO_Central"/>
</dbReference>
<dbReference type="GO" id="GO:0051016">
    <property type="term" value="P:barbed-end actin filament capping"/>
    <property type="evidence" value="ECO:0000318"/>
    <property type="project" value="GO_Central"/>
</dbReference>
<dbReference type="GO" id="GO:0071364">
    <property type="term" value="P:cellular response to epidermal growth factor stimulus"/>
    <property type="evidence" value="ECO:0000250"/>
    <property type="project" value="UniProtKB"/>
</dbReference>
<dbReference type="GO" id="GO:0035729">
    <property type="term" value="P:cellular response to hepatocyte growth factor stimulus"/>
    <property type="evidence" value="ECO:0000250"/>
    <property type="project" value="UniProtKB"/>
</dbReference>
<dbReference type="GO" id="GO:0060327">
    <property type="term" value="P:cytoplasmic actin-based contraction involved in cell motility"/>
    <property type="evidence" value="ECO:0000250"/>
    <property type="project" value="UniProtKB"/>
</dbReference>
<dbReference type="GO" id="GO:0007173">
    <property type="term" value="P:epidermal growth factor receptor signaling pathway"/>
    <property type="evidence" value="ECO:0000250"/>
    <property type="project" value="UniProtKB"/>
</dbReference>
<dbReference type="GO" id="GO:0032233">
    <property type="term" value="P:positive regulation of actin filament bundle assembly"/>
    <property type="evidence" value="ECO:0000250"/>
    <property type="project" value="UniProtKB"/>
</dbReference>
<dbReference type="GO" id="GO:0030335">
    <property type="term" value="P:positive regulation of cell migration"/>
    <property type="evidence" value="ECO:0000250"/>
    <property type="project" value="UniProtKB"/>
</dbReference>
<dbReference type="GO" id="GO:0010634">
    <property type="term" value="P:positive regulation of epithelial cell migration"/>
    <property type="evidence" value="ECO:0000250"/>
    <property type="project" value="UniProtKB"/>
</dbReference>
<dbReference type="GO" id="GO:0051125">
    <property type="term" value="P:regulation of actin nucleation"/>
    <property type="evidence" value="ECO:0000250"/>
    <property type="project" value="UniProtKB"/>
</dbReference>
<dbReference type="GO" id="GO:0008360">
    <property type="term" value="P:regulation of cell shape"/>
    <property type="evidence" value="ECO:0000250"/>
    <property type="project" value="UniProtKB"/>
</dbReference>
<dbReference type="GO" id="GO:2000392">
    <property type="term" value="P:regulation of lamellipodium morphogenesis"/>
    <property type="evidence" value="ECO:0000250"/>
    <property type="project" value="UniProtKB"/>
</dbReference>
<dbReference type="GO" id="GO:0061041">
    <property type="term" value="P:regulation of wound healing"/>
    <property type="evidence" value="ECO:0000250"/>
    <property type="project" value="UniProtKB"/>
</dbReference>
<dbReference type="GO" id="GO:0009617">
    <property type="term" value="P:response to bacterium"/>
    <property type="evidence" value="ECO:0000250"/>
    <property type="project" value="UniProtKB"/>
</dbReference>
<dbReference type="CDD" id="cd11290">
    <property type="entry name" value="gelsolin_S1_like"/>
    <property type="match status" value="1"/>
</dbReference>
<dbReference type="CDD" id="cd11289">
    <property type="entry name" value="gelsolin_S2_like"/>
    <property type="match status" value="1"/>
</dbReference>
<dbReference type="CDD" id="cd11292">
    <property type="entry name" value="gelsolin_S3_like"/>
    <property type="match status" value="1"/>
</dbReference>
<dbReference type="CDD" id="cd11293">
    <property type="entry name" value="gelsolin_S4_like"/>
    <property type="match status" value="1"/>
</dbReference>
<dbReference type="CDD" id="cd11288">
    <property type="entry name" value="gelsolin_S5_like"/>
    <property type="match status" value="1"/>
</dbReference>
<dbReference type="CDD" id="cd11291">
    <property type="entry name" value="gelsolin_S6_like"/>
    <property type="match status" value="1"/>
</dbReference>
<dbReference type="DisProt" id="DP02511"/>
<dbReference type="FunFam" id="3.40.20.10:FF:000001">
    <property type="entry name" value="Gelsolin"/>
    <property type="match status" value="1"/>
</dbReference>
<dbReference type="FunFam" id="3.40.20.10:FF:000002">
    <property type="entry name" value="Gelsolin"/>
    <property type="match status" value="1"/>
</dbReference>
<dbReference type="FunFam" id="3.40.20.10:FF:000004">
    <property type="entry name" value="Gelsolin"/>
    <property type="match status" value="1"/>
</dbReference>
<dbReference type="FunFam" id="3.40.20.10:FF:000005">
    <property type="entry name" value="Gelsolin"/>
    <property type="match status" value="1"/>
</dbReference>
<dbReference type="FunFam" id="3.40.20.10:FF:000027">
    <property type="entry name" value="Villin 1"/>
    <property type="match status" value="1"/>
</dbReference>
<dbReference type="FunFam" id="1.10.950.10:FF:000005">
    <property type="entry name" value="Villin-1"/>
    <property type="match status" value="1"/>
</dbReference>
<dbReference type="Gene3D" id="3.40.20.10">
    <property type="entry name" value="Severin"/>
    <property type="match status" value="6"/>
</dbReference>
<dbReference type="Gene3D" id="1.10.950.10">
    <property type="entry name" value="Villin headpiece domain"/>
    <property type="match status" value="1"/>
</dbReference>
<dbReference type="InterPro" id="IPR029006">
    <property type="entry name" value="ADF-H/Gelsolin-like_dom_sf"/>
</dbReference>
<dbReference type="InterPro" id="IPR007123">
    <property type="entry name" value="Gelsolin-like_dom"/>
</dbReference>
<dbReference type="InterPro" id="IPR036180">
    <property type="entry name" value="Gelsolin-like_dom_sf"/>
</dbReference>
<dbReference type="InterPro" id="IPR007122">
    <property type="entry name" value="Villin/Gelsolin"/>
</dbReference>
<dbReference type="InterPro" id="IPR003128">
    <property type="entry name" value="Villin_headpiece"/>
</dbReference>
<dbReference type="InterPro" id="IPR036886">
    <property type="entry name" value="Villin_headpiece_dom_sf"/>
</dbReference>
<dbReference type="PANTHER" id="PTHR11977">
    <property type="entry name" value="VILLIN"/>
    <property type="match status" value="1"/>
</dbReference>
<dbReference type="PANTHER" id="PTHR11977:SF35">
    <property type="entry name" value="VILLIN-1"/>
    <property type="match status" value="1"/>
</dbReference>
<dbReference type="Pfam" id="PF00626">
    <property type="entry name" value="Gelsolin"/>
    <property type="match status" value="6"/>
</dbReference>
<dbReference type="Pfam" id="PF02209">
    <property type="entry name" value="VHP"/>
    <property type="match status" value="1"/>
</dbReference>
<dbReference type="PRINTS" id="PR00597">
    <property type="entry name" value="GELSOLIN"/>
</dbReference>
<dbReference type="SMART" id="SM00262">
    <property type="entry name" value="GEL"/>
    <property type="match status" value="6"/>
</dbReference>
<dbReference type="SMART" id="SM00153">
    <property type="entry name" value="VHP"/>
    <property type="match status" value="1"/>
</dbReference>
<dbReference type="SUPFAM" id="SSF55753">
    <property type="entry name" value="Actin depolymerizing proteins"/>
    <property type="match status" value="4"/>
</dbReference>
<dbReference type="SUPFAM" id="SSF82754">
    <property type="entry name" value="C-terminal, gelsolin-like domain of Sec23/24"/>
    <property type="match status" value="2"/>
</dbReference>
<dbReference type="SUPFAM" id="SSF47050">
    <property type="entry name" value="VHP, Villin headpiece domain"/>
    <property type="match status" value="1"/>
</dbReference>
<dbReference type="PROSITE" id="PS51089">
    <property type="entry name" value="HP"/>
    <property type="match status" value="1"/>
</dbReference>
<evidence type="ECO:0000250" key="1"/>
<evidence type="ECO:0000255" key="2">
    <source>
        <dbReference type="PROSITE-ProRule" id="PRU00595"/>
    </source>
</evidence>
<evidence type="ECO:0000269" key="3">
    <source>
    </source>
</evidence>
<evidence type="ECO:0000269" key="4">
    <source>
    </source>
</evidence>
<evidence type="ECO:0000269" key="5">
    <source>
    </source>
</evidence>
<evidence type="ECO:0000305" key="6"/>
<evidence type="ECO:0007829" key="7">
    <source>
        <dbReference type="PDB" id="1QQV"/>
    </source>
</evidence>
<evidence type="ECO:0007829" key="8">
    <source>
        <dbReference type="PDB" id="1WY3"/>
    </source>
</evidence>
<evidence type="ECO:0007829" key="9">
    <source>
        <dbReference type="PDB" id="1YU5"/>
    </source>
</evidence>
<evidence type="ECO:0007829" key="10">
    <source>
        <dbReference type="PDB" id="2LLF"/>
    </source>
</evidence>
<evidence type="ECO:0007829" key="11">
    <source>
        <dbReference type="PDB" id="2VIK"/>
    </source>
</evidence>
<evidence type="ECO:0007829" key="12">
    <source>
        <dbReference type="PDB" id="2VIL"/>
    </source>
</evidence>
<organism>
    <name type="scientific">Gallus gallus</name>
    <name type="common">Chicken</name>
    <dbReference type="NCBI Taxonomy" id="9031"/>
    <lineage>
        <taxon>Eukaryota</taxon>
        <taxon>Metazoa</taxon>
        <taxon>Chordata</taxon>
        <taxon>Craniata</taxon>
        <taxon>Vertebrata</taxon>
        <taxon>Euteleostomi</taxon>
        <taxon>Archelosauria</taxon>
        <taxon>Archosauria</taxon>
        <taxon>Dinosauria</taxon>
        <taxon>Saurischia</taxon>
        <taxon>Theropoda</taxon>
        <taxon>Coelurosauria</taxon>
        <taxon>Aves</taxon>
        <taxon>Neognathae</taxon>
        <taxon>Galloanserae</taxon>
        <taxon>Galliformes</taxon>
        <taxon>Phasianidae</taxon>
        <taxon>Phasianinae</taxon>
        <taxon>Gallus</taxon>
    </lineage>
</organism>
<keyword id="KW-0002">3D-structure</keyword>
<keyword id="KW-0117">Actin capping</keyword>
<keyword id="KW-0009">Actin-binding</keyword>
<keyword id="KW-0106">Calcium</keyword>
<keyword id="KW-0966">Cell projection</keyword>
<keyword id="KW-0963">Cytoplasm</keyword>
<keyword id="KW-0206">Cytoskeleton</keyword>
<keyword id="KW-0903">Direct protein sequencing</keyword>
<keyword id="KW-1185">Reference proteome</keyword>
<keyword id="KW-0677">Repeat</keyword>
<reference key="1">
    <citation type="journal article" date="1988" name="Proc. Natl. Acad. Sci. U.S.A.">
        <title>Villin sequence and peptide map identify six homologous domains.</title>
        <authorList>
            <person name="Bazari W.L."/>
            <person name="Matsudaira P."/>
            <person name="Wallek M."/>
            <person name="Smeal T."/>
            <person name="Jakes R."/>
            <person name="Ahmed Y."/>
        </authorList>
    </citation>
    <scope>NUCLEOTIDE SEQUENCE [MRNA]</scope>
</reference>
<reference key="2">
    <citation type="journal article" date="1981" name="J. Biol. Chem.">
        <title>Demonstration of at least two different actin-binding sites in villin, a calcium-regulated modulator of F-actin organization.</title>
        <authorList>
            <person name="Glenney J.R. Jr."/>
            <person name="Geisler N."/>
            <person name="Kaulfus P."/>
            <person name="Weber K."/>
        </authorList>
    </citation>
    <scope>PROTEIN SEQUENCE OF 751-826</scope>
</reference>
<reference key="3">
    <citation type="journal article" date="1983" name="J. Biol. Chem.">
        <title>Demonstration of three distinct calcium-binding sites in villin, a modulator of actin assembly.</title>
        <authorList>
            <person name="Hesterberg L.K."/>
            <person name="Weber K."/>
        </authorList>
    </citation>
    <scope>CALCIUM-BINDING SITES</scope>
</reference>
<reference key="4">
    <citation type="journal article" date="1987" name="J. Cell Biol.">
        <title>Tropomyosin distinguishes between the two actin-binding sites of villin and affects actin-binding properties of other brush border proteins.</title>
        <authorList>
            <person name="Burgess D.R."/>
            <person name="Broschat K.O."/>
            <person name="Hayden J.M."/>
        </authorList>
    </citation>
    <scope>FUNCTION</scope>
    <scope>ASSOCIATION WITH F-ACTIN</scope>
    <scope>SUBCELLULAR LOCATION</scope>
    <scope>TISSUE SPECIFICITY</scope>
</reference>
<reference key="5">
    <citation type="journal article" date="1992" name="J. Biol. Chem.">
        <title>An actin footprint on villin. Single site substitutions in a cluster of basic residues inhibit the actin severing but not capping activity of villin.</title>
        <authorList>
            <person name="de Arruda M.V."/>
            <person name="Bazari H."/>
            <person name="Wallek M."/>
            <person name="Matsudaira P."/>
        </authorList>
    </citation>
    <scope>FUNCTION</scope>
    <scope>ASSOCIATION WITH F-ACTIN</scope>
    <scope>MUTAGENESIS OF ARG-138; HIS-141; GLY-144; LYS-145 AND LYS-146</scope>
</reference>
<reference key="6">
    <citation type="journal article" date="1994" name="Protein Sci.">
        <title>Solution structure of villin 14T, a domain conserved among actin-severing proteins.</title>
        <authorList>
            <person name="Markus M.A."/>
            <person name="Nakayama T."/>
            <person name="Matsudaira P."/>
            <person name="Wagner G."/>
        </authorList>
    </citation>
    <scope>STRUCTURE BY NMR OF 1-127</scope>
</reference>
<reference key="7">
    <citation type="journal article" date="1997" name="Protein Sci.">
        <title>Refined structure of villin 14T and a detailed comparison with other actin-severing domains.</title>
        <authorList>
            <person name="Markus M.A."/>
            <person name="Matsudaira P."/>
            <person name="Wagner G."/>
        </authorList>
    </citation>
    <scope>STRUCTURE BY NMR OF 1-127</scope>
</reference>
<reference key="8">
    <citation type="journal article" date="1997" name="Nat. Struct. Biol.">
        <title>NMR structure of the 35-residue villin headpiece subdomain.</title>
        <authorList>
            <person name="McKnight C.J."/>
            <person name="Matsudaira P.T."/>
            <person name="Kim P.S."/>
        </authorList>
    </citation>
    <scope>STRUCTURE BY NMR OF 792-826</scope>
</reference>
<reference key="9">
    <citation type="journal article" date="2005" name="Biochemistry">
        <title>High-resolution crystal structures of villin headpiece and mutants with reduced F-actin binding activity.</title>
        <authorList>
            <person name="Meng J."/>
            <person name="Vardar D."/>
            <person name="Wang Y."/>
            <person name="Guo H.-C."/>
            <person name="Head J.F."/>
            <person name="McKnight C.J."/>
        </authorList>
    </citation>
    <scope>X-RAY CRYSTALLOGRAPHY (1.45 ANGSTROMS) OF 760-826</scope>
    <scope>MUTAGENESIS OF ARG-787 AND TRP-814</scope>
</reference>
<reference key="10">
    <citation type="journal article" date="2005" name="Proc. Natl. Acad. Sci. U.S.A.">
        <title>High-resolution X-ray crystal structures of the villin headpiece subdomain, an ultrafast folding protein.</title>
        <authorList>
            <person name="Chiu T.K."/>
            <person name="Kubelka J."/>
            <person name="Herbst-Irmer R."/>
            <person name="Eaton W.A."/>
            <person name="Hofrichter J."/>
            <person name="Davies D.R."/>
        </authorList>
    </citation>
    <scope>X-RAY CRYSTALLOGRAPHY (0.95 ANGSTROMS) OF 792-826</scope>
</reference>
<comment type="function">
    <text evidence="1 4 5">Epithelial cell-specific Ca(2+)-regulated actin-modifying protein that modulates the reorganization of microvillar actin filaments. Plays a role in the actin nucleation, actin filament bundle assembly, actin filament capping and severing. Binds phosphatidylinositol 4,5-bisphosphate (PIP2) and lysophosphatidic acid (LPA); binds LPA with higher affinity than PIP2. Binding to LPA increases its phosphorylation by SRC and inhibits all actin-modifying activities. Binding to PIP2 inhibits actin-capping and -severing activities but enhances actin-bundling activity. Regulates the intestinal epithelial cell morphology, cell invasion, cell migration and apoptosis. Protects against apoptosis induced by dextran sodium sulfate (DSS) in the gastrointestinal epithelium. Appears to regulate cell death by maintaining mitochondrial integrity. Enhances hepatocyte growth factor (HGF)-induced epithelial cell motility, chemotaxis and wound repair (By similarity). Its actin-bundling activity is inhibited by tropomyosin.</text>
</comment>
<comment type="subunit">
    <text evidence="1">Monomer. Homodimer (By similarity). Associates with F-actin; the association with F-actin is inhibited by tropomyosin.</text>
</comment>
<comment type="subcellular location">
    <subcellularLocation>
        <location evidence="5">Cytoplasm</location>
        <location evidence="5">Cytoskeleton</location>
    </subcellularLocation>
    <subcellularLocation>
        <location evidence="5">Cell projection</location>
        <location evidence="5">Microvillus</location>
    </subcellularLocation>
    <subcellularLocation>
        <location evidence="1">Cell projection</location>
        <location evidence="1">Lamellipodium</location>
    </subcellularLocation>
    <subcellularLocation>
        <location evidence="1">Cell projection</location>
        <location evidence="1">Ruffle</location>
    </subcellularLocation>
    <subcellularLocation>
        <location evidence="1">Cell projection</location>
        <location evidence="1">Filopodium tip</location>
    </subcellularLocation>
    <subcellularLocation>
        <location evidence="1">Cell projection</location>
        <location evidence="1">Filopodium</location>
    </subcellularLocation>
</comment>
<comment type="tissue specificity">
    <text evidence="5">Specifically expressed in epithelial cells. Component of brush border microvilli.</text>
</comment>
<comment type="domain">
    <text evidence="1">Consists of a large core fragment in the N-terminal portion and a small headpiece (HP) in the C-terminal portion. The core fragment is necessary for both actin-nucleating and -severing activities, whereas the HP binds F-actin strongly in both the presence and absence of calcium and is necessary in actin-bundling activity. The Gelsolin-like 1 repeat is necessary for the actin-capping activity. The entire core fragment is necessary for the actin-severing activity (By similarity).</text>
</comment>
<comment type="PTM">
    <text evidence="1">Phosphorylated on tyrosine residues. The unphosphorylated form increases the initial rate of actin-nucleating activity, whereas the tyrosine-phosphorylated form inhibits actin-nucleating activity, enhances actin-bundling activity and enhances actin-severing activity by reducing high Ca(2+) requirements. The tyrosine-phosphorylated form does not regulate actin-capping activity. Tyrosine phosphorylation is essential for cell migration: tyrosine phosphorylation sites in the N-terminus half regulate actin reorganization and cell morphology, whereas tyrosine phosphorylation sites in the C-terminus half regulate cell migration. Tyrosine phosphorylation is induced by epidermal growth factor (EGF) and stimulates cell migration (By similarity).</text>
</comment>
<comment type="similarity">
    <text evidence="6">Belongs to the villin/gelsolin family.</text>
</comment>
<gene>
    <name type="primary">VIL1</name>
    <name type="synonym">VIL</name>
</gene>
<name>VILI_CHICK</name>
<sequence>MVELSKKVTGKLDKTTPGIQIWRIENMEMVPVPTKSYGNFYEGDCYVLLSTRKTGSGFSYNIHYWLGKNSSQDEQGAAAIYTTQMDEYLGSVAVQHREVQGHESETFRAYFKQGLIYKQGGVASGMKHVETNTYNVQRLLHVKGKKNVVAAEVEMSWKSFNLGDVFLLDLGQLIIQWNGPESNRAERLRAMTLAKDIRDRERAGRAKVGVVEGENEAASPELMQALTHVLGEKKNIKAATPDEQVHQALNSALKLYHVSDASGNLVIQEVAIRPLTQDMLQHEDCYILDQAGLKIFVWKGKNANKEEKQQAMSRALGFIKAKNYLASTSVETENDGSESAVFRQLFQKWTVPNQTSGLGKTHTVGKVAKVEQVKFDATTMHVKPEVAAQQKMVDDGSGEAEVWRVENQELVPVEKRWLGHFYGGDCYLVLYTYYVGPKVNRIIYIWQGRHASTDELAASAYQAVFLDQKYNNEPVQVRVTMGKEPAHLMAIFKGKMVVYENGSSRAGGTEPASSTRLFHVHGTNEYNTKAFEVPVRAASLNSNDVFVLKTPSSCYLWYGKGCSGDEREMGKMVADIISKTEKPVVAEGQEPPEFWVALGGKTSYANSKRLQEENPSVPPRLFECSNKTGRFLATEIVDFTQDDLDENDVYLLDTWDQIFFWIGKGANESEKEAAAETAQEYLRSHPGSRDLDTPIIVVKQGFEPPTFTGWFMAWDPLCWSDRKSYDELKAELGDNASIGQLVSGLTSKNEVFTATTTLVPTKLETFPLDVLVNTAAEDLPRGVDPSRKENHLSDEDFKAVFGMTRSAFANLPLWKQQNLKKEKGLF</sequence>
<accession>P02640</accession>